<name>OXR1_NEUCR</name>
<feature type="chain" id="PRO_0000058118" description="Oxidation resistance protein 1">
    <location>
        <begin position="1"/>
        <end position="389"/>
    </location>
</feature>
<feature type="domain" description="TLDc" evidence="2">
    <location>
        <begin position="138"/>
        <end position="385"/>
    </location>
</feature>
<feature type="region of interest" description="Disordered" evidence="3">
    <location>
        <begin position="1"/>
        <end position="45"/>
    </location>
</feature>
<feature type="region of interest" description="Disordered" evidence="3">
    <location>
        <begin position="67"/>
        <end position="90"/>
    </location>
</feature>
<feature type="region of interest" description="Disordered" evidence="3">
    <location>
        <begin position="238"/>
        <end position="269"/>
    </location>
</feature>
<feature type="compositionally biased region" description="Basic residues" evidence="3">
    <location>
        <begin position="1"/>
        <end position="12"/>
    </location>
</feature>
<feature type="compositionally biased region" description="Polar residues" evidence="3">
    <location>
        <begin position="22"/>
        <end position="45"/>
    </location>
</feature>
<feature type="compositionally biased region" description="Polar residues" evidence="3">
    <location>
        <begin position="241"/>
        <end position="256"/>
    </location>
</feature>
<feature type="compositionally biased region" description="Low complexity" evidence="3">
    <location>
        <begin position="257"/>
        <end position="269"/>
    </location>
</feature>
<gene>
    <name type="primary">oxr1</name>
    <name type="ORF">NCU02394</name>
</gene>
<keyword id="KW-0496">Mitochondrion</keyword>
<keyword id="KW-1185">Reference proteome</keyword>
<accession>Q7S4P1</accession>
<evidence type="ECO:0000250" key="1"/>
<evidence type="ECO:0000255" key="2">
    <source>
        <dbReference type="PROSITE-ProRule" id="PRU01234"/>
    </source>
</evidence>
<evidence type="ECO:0000256" key="3">
    <source>
        <dbReference type="SAM" id="MobiDB-lite"/>
    </source>
</evidence>
<evidence type="ECO:0000305" key="4"/>
<comment type="function">
    <text evidence="1">May be involved in protection from oxidative damage.</text>
</comment>
<comment type="subcellular location">
    <subcellularLocation>
        <location evidence="1">Mitochondrion</location>
    </subcellularLocation>
</comment>
<comment type="similarity">
    <text evidence="4">Belongs to the OXR1 family.</text>
</comment>
<organism>
    <name type="scientific">Neurospora crassa (strain ATCC 24698 / 74-OR23-1A / CBS 708.71 / DSM 1257 / FGSC 987)</name>
    <dbReference type="NCBI Taxonomy" id="367110"/>
    <lineage>
        <taxon>Eukaryota</taxon>
        <taxon>Fungi</taxon>
        <taxon>Dikarya</taxon>
        <taxon>Ascomycota</taxon>
        <taxon>Pezizomycotina</taxon>
        <taxon>Sordariomycetes</taxon>
        <taxon>Sordariomycetidae</taxon>
        <taxon>Sordariales</taxon>
        <taxon>Sordariaceae</taxon>
        <taxon>Neurospora</taxon>
    </lineage>
</organism>
<dbReference type="EMBL" id="CM002242">
    <property type="protein sequence ID" value="EAA30478.2"/>
    <property type="molecule type" value="Genomic_DNA"/>
</dbReference>
<dbReference type="RefSeq" id="XP_959714.2">
    <property type="nucleotide sequence ID" value="XM_954621.2"/>
</dbReference>
<dbReference type="SMR" id="Q7S4P1"/>
<dbReference type="FunCoup" id="Q7S4P1">
    <property type="interactions" value="10"/>
</dbReference>
<dbReference type="STRING" id="367110.Q7S4P1"/>
<dbReference type="PaxDb" id="5141-EFNCRP00000003218"/>
<dbReference type="EnsemblFungi" id="EAA30478">
    <property type="protein sequence ID" value="EAA30478"/>
    <property type="gene ID" value="NCU02394"/>
</dbReference>
<dbReference type="GeneID" id="3875861"/>
<dbReference type="KEGG" id="ncr:NCU02394"/>
<dbReference type="VEuPathDB" id="FungiDB:NCU02394"/>
<dbReference type="HOGENOM" id="CLU_029204_0_1_1"/>
<dbReference type="InParanoid" id="Q7S4P1"/>
<dbReference type="OrthoDB" id="26679at2759"/>
<dbReference type="Proteomes" id="UP000001805">
    <property type="component" value="Chromosome 7, Linkage Group VII"/>
</dbReference>
<dbReference type="GO" id="GO:0005739">
    <property type="term" value="C:mitochondrion"/>
    <property type="evidence" value="ECO:0007669"/>
    <property type="project" value="UniProtKB-SubCell"/>
</dbReference>
<dbReference type="GO" id="GO:0005634">
    <property type="term" value="C:nucleus"/>
    <property type="evidence" value="ECO:0000318"/>
    <property type="project" value="GO_Central"/>
</dbReference>
<dbReference type="GO" id="GO:0006979">
    <property type="term" value="P:response to oxidative stress"/>
    <property type="evidence" value="ECO:0000318"/>
    <property type="project" value="GO_Central"/>
</dbReference>
<dbReference type="InterPro" id="IPR006571">
    <property type="entry name" value="TLDc_dom"/>
</dbReference>
<dbReference type="PANTHER" id="PTHR23354:SF62">
    <property type="entry name" value="MUSTARD, ISOFORM V"/>
    <property type="match status" value="1"/>
</dbReference>
<dbReference type="PANTHER" id="PTHR23354">
    <property type="entry name" value="NUCLEOLAR PROTEIN 7/ESTROGEN RECEPTOR COACTIVATOR-RELATED"/>
    <property type="match status" value="1"/>
</dbReference>
<dbReference type="Pfam" id="PF07534">
    <property type="entry name" value="TLD"/>
    <property type="match status" value="2"/>
</dbReference>
<dbReference type="SMART" id="SM00584">
    <property type="entry name" value="TLDc"/>
    <property type="match status" value="1"/>
</dbReference>
<dbReference type="PROSITE" id="PS51886">
    <property type="entry name" value="TLDC"/>
    <property type="match status" value="1"/>
</dbReference>
<protein>
    <recommendedName>
        <fullName>Oxidation resistance protein 1</fullName>
    </recommendedName>
</protein>
<reference key="1">
    <citation type="journal article" date="2003" name="Nature">
        <title>The genome sequence of the filamentous fungus Neurospora crassa.</title>
        <authorList>
            <person name="Galagan J.E."/>
            <person name="Calvo S.E."/>
            <person name="Borkovich K.A."/>
            <person name="Selker E.U."/>
            <person name="Read N.D."/>
            <person name="Jaffe D.B."/>
            <person name="FitzHugh W."/>
            <person name="Ma L.-J."/>
            <person name="Smirnov S."/>
            <person name="Purcell S."/>
            <person name="Rehman B."/>
            <person name="Elkins T."/>
            <person name="Engels R."/>
            <person name="Wang S."/>
            <person name="Nielsen C.B."/>
            <person name="Butler J."/>
            <person name="Endrizzi M."/>
            <person name="Qui D."/>
            <person name="Ianakiev P."/>
            <person name="Bell-Pedersen D."/>
            <person name="Nelson M.A."/>
            <person name="Werner-Washburne M."/>
            <person name="Selitrennikoff C.P."/>
            <person name="Kinsey J.A."/>
            <person name="Braun E.L."/>
            <person name="Zelter A."/>
            <person name="Schulte U."/>
            <person name="Kothe G.O."/>
            <person name="Jedd G."/>
            <person name="Mewes H.-W."/>
            <person name="Staben C."/>
            <person name="Marcotte E."/>
            <person name="Greenberg D."/>
            <person name="Roy A."/>
            <person name="Foley K."/>
            <person name="Naylor J."/>
            <person name="Stange-Thomann N."/>
            <person name="Barrett R."/>
            <person name="Gnerre S."/>
            <person name="Kamal M."/>
            <person name="Kamvysselis M."/>
            <person name="Mauceli E.W."/>
            <person name="Bielke C."/>
            <person name="Rudd S."/>
            <person name="Frishman D."/>
            <person name="Krystofova S."/>
            <person name="Rasmussen C."/>
            <person name="Metzenberg R.L."/>
            <person name="Perkins D.D."/>
            <person name="Kroken S."/>
            <person name="Cogoni C."/>
            <person name="Macino G."/>
            <person name="Catcheside D.E.A."/>
            <person name="Li W."/>
            <person name="Pratt R.J."/>
            <person name="Osmani S.A."/>
            <person name="DeSouza C.P.C."/>
            <person name="Glass N.L."/>
            <person name="Orbach M.J."/>
            <person name="Berglund J.A."/>
            <person name="Voelker R."/>
            <person name="Yarden O."/>
            <person name="Plamann M."/>
            <person name="Seiler S."/>
            <person name="Dunlap J.C."/>
            <person name="Radford A."/>
            <person name="Aramayo R."/>
            <person name="Natvig D.O."/>
            <person name="Alex L.A."/>
            <person name="Mannhaupt G."/>
            <person name="Ebbole D.J."/>
            <person name="Freitag M."/>
            <person name="Paulsen I."/>
            <person name="Sachs M.S."/>
            <person name="Lander E.S."/>
            <person name="Nusbaum C."/>
            <person name="Birren B.W."/>
        </authorList>
    </citation>
    <scope>NUCLEOTIDE SEQUENCE [LARGE SCALE GENOMIC DNA]</scope>
    <source>
        <strain>ATCC 24698 / 74-OR23-1A / CBS 708.71 / DSM 1257 / FGSC 987</strain>
    </source>
</reference>
<proteinExistence type="inferred from homology"/>
<sequence>MSYHDARRRHPHPIQTFRPESEYSSSAPGSGAQTPTGSGASSSQLPGLVSSIWGGLIRRFSAETPSLTHSQSYPADSSHSHFDDHNYNNSNDNNGVDGVYVPPRFHETIQRTASPMQPPPLEPVQLKGFAPDTPASARILTQAIAEEIRIMVPTRLSIVDEWNLVYSLDQDGASLGTLYDKCAKYSGRRVGFVLVVKDAEGGIFGAYLSDFPHPAPKYFGTGECFLWRASVMASLPPPPSADTTNLRGRTSTISSVGTGTDTATNTATNHNSGDDLASCTVLRATTTATPPHNDSADDLFADLTGTVDQTTIRFKAFPYSGVNDYYILCESHFLSVGAGDGKFGLWLDDGLEKGVSSTSQTFGNEQLSDQGEKFSVLGVEVWVIGSGGL</sequence>